<dbReference type="EMBL" id="AE014075">
    <property type="protein sequence ID" value="AAN82372.1"/>
    <property type="status" value="ALT_INIT"/>
    <property type="molecule type" value="Genomic_DNA"/>
</dbReference>
<dbReference type="RefSeq" id="WP_001295556.1">
    <property type="nucleotide sequence ID" value="NZ_CP051263.1"/>
</dbReference>
<dbReference type="SMR" id="P0AGA0"/>
<dbReference type="STRING" id="199310.c3931"/>
<dbReference type="GeneID" id="93778806"/>
<dbReference type="KEGG" id="ecc:c3931"/>
<dbReference type="eggNOG" id="COG1314">
    <property type="taxonomic scope" value="Bacteria"/>
</dbReference>
<dbReference type="HOGENOM" id="CLU_094156_2_2_6"/>
<dbReference type="Proteomes" id="UP000001410">
    <property type="component" value="Chromosome"/>
</dbReference>
<dbReference type="GO" id="GO:0005886">
    <property type="term" value="C:plasma membrane"/>
    <property type="evidence" value="ECO:0007669"/>
    <property type="project" value="UniProtKB-SubCell"/>
</dbReference>
<dbReference type="GO" id="GO:0015450">
    <property type="term" value="F:protein-transporting ATPase activity"/>
    <property type="evidence" value="ECO:0007669"/>
    <property type="project" value="InterPro"/>
</dbReference>
<dbReference type="GO" id="GO:0065002">
    <property type="term" value="P:intracellular protein transmembrane transport"/>
    <property type="evidence" value="ECO:0007669"/>
    <property type="project" value="TreeGrafter"/>
</dbReference>
<dbReference type="GO" id="GO:0009306">
    <property type="term" value="P:protein secretion"/>
    <property type="evidence" value="ECO:0007669"/>
    <property type="project" value="InterPro"/>
</dbReference>
<dbReference type="GO" id="GO:0043952">
    <property type="term" value="P:protein transport by the Sec complex"/>
    <property type="evidence" value="ECO:0007669"/>
    <property type="project" value="TreeGrafter"/>
</dbReference>
<dbReference type="InterPro" id="IPR004692">
    <property type="entry name" value="SecG"/>
</dbReference>
<dbReference type="NCBIfam" id="TIGR00810">
    <property type="entry name" value="secG"/>
    <property type="match status" value="1"/>
</dbReference>
<dbReference type="PANTHER" id="PTHR34182">
    <property type="entry name" value="PROTEIN-EXPORT MEMBRANE PROTEIN SECG"/>
    <property type="match status" value="1"/>
</dbReference>
<dbReference type="PANTHER" id="PTHR34182:SF1">
    <property type="entry name" value="PROTEIN-EXPORT MEMBRANE PROTEIN SECG"/>
    <property type="match status" value="1"/>
</dbReference>
<dbReference type="Pfam" id="PF03840">
    <property type="entry name" value="SecG"/>
    <property type="match status" value="1"/>
</dbReference>
<dbReference type="PRINTS" id="PR01651">
    <property type="entry name" value="SECGEXPORT"/>
</dbReference>
<sequence>MYEALLVVFLIVAIGLVGLIMLQQGKGADMGASFGAGASATLFGSSGSGNFMTRMTALLATLFFIISLVLGNINSNKTNKGSEWENLSAPAKTEQTQPAAPAKPTSDIPN</sequence>
<gene>
    <name type="primary">secG</name>
    <name type="ordered locus">c3931</name>
</gene>
<reference key="1">
    <citation type="journal article" date="2002" name="Proc. Natl. Acad. Sci. U.S.A.">
        <title>Extensive mosaic structure revealed by the complete genome sequence of uropathogenic Escherichia coli.</title>
        <authorList>
            <person name="Welch R.A."/>
            <person name="Burland V."/>
            <person name="Plunkett G. III"/>
            <person name="Redford P."/>
            <person name="Roesch P."/>
            <person name="Rasko D."/>
            <person name="Buckles E.L."/>
            <person name="Liou S.-R."/>
            <person name="Boutin A."/>
            <person name="Hackett J."/>
            <person name="Stroud D."/>
            <person name="Mayhew G.F."/>
            <person name="Rose D.J."/>
            <person name="Zhou S."/>
            <person name="Schwartz D.C."/>
            <person name="Perna N.T."/>
            <person name="Mobley H.L.T."/>
            <person name="Donnenberg M.S."/>
            <person name="Blattner F.R."/>
        </authorList>
    </citation>
    <scope>NUCLEOTIDE SEQUENCE [LARGE SCALE GENOMIC DNA]</scope>
    <source>
        <strain>CFT073 / ATCC 700928 / UPEC</strain>
    </source>
</reference>
<evidence type="ECO:0000250" key="1"/>
<evidence type="ECO:0000255" key="2"/>
<evidence type="ECO:0000256" key="3">
    <source>
        <dbReference type="SAM" id="MobiDB-lite"/>
    </source>
</evidence>
<evidence type="ECO:0000305" key="4"/>
<name>SECG_ECOL6</name>
<organism>
    <name type="scientific">Escherichia coli O6:H1 (strain CFT073 / ATCC 700928 / UPEC)</name>
    <dbReference type="NCBI Taxonomy" id="199310"/>
    <lineage>
        <taxon>Bacteria</taxon>
        <taxon>Pseudomonadati</taxon>
        <taxon>Pseudomonadota</taxon>
        <taxon>Gammaproteobacteria</taxon>
        <taxon>Enterobacterales</taxon>
        <taxon>Enterobacteriaceae</taxon>
        <taxon>Escherichia</taxon>
    </lineage>
</organism>
<keyword id="KW-0997">Cell inner membrane</keyword>
<keyword id="KW-1003">Cell membrane</keyword>
<keyword id="KW-0472">Membrane</keyword>
<keyword id="KW-0653">Protein transport</keyword>
<keyword id="KW-1185">Reference proteome</keyword>
<keyword id="KW-0811">Translocation</keyword>
<keyword id="KW-0812">Transmembrane</keyword>
<keyword id="KW-1133">Transmembrane helix</keyword>
<keyword id="KW-0813">Transport</keyword>
<feature type="chain" id="PRO_0000157227" description="Protein-export membrane protein SecG">
    <location>
        <begin position="1"/>
        <end position="110"/>
    </location>
</feature>
<feature type="topological domain" description="Periplasmic" evidence="2">
    <location>
        <begin position="1"/>
        <end position="3"/>
    </location>
</feature>
<feature type="transmembrane region" description="Helical" evidence="2">
    <location>
        <begin position="4"/>
        <end position="22"/>
    </location>
</feature>
<feature type="topological domain" description="Cytoplasmic" evidence="2">
    <location>
        <begin position="23"/>
        <end position="54"/>
    </location>
</feature>
<feature type="transmembrane region" description="Helical" evidence="2">
    <location>
        <begin position="55"/>
        <end position="72"/>
    </location>
</feature>
<feature type="topological domain" description="Periplasmic" evidence="2">
    <location>
        <begin position="73"/>
        <end position="110"/>
    </location>
</feature>
<feature type="region of interest" description="Disordered" evidence="3">
    <location>
        <begin position="81"/>
        <end position="110"/>
    </location>
</feature>
<proteinExistence type="inferred from homology"/>
<protein>
    <recommendedName>
        <fullName>Protein-export membrane protein SecG</fullName>
    </recommendedName>
    <alternativeName>
        <fullName>P12</fullName>
    </alternativeName>
    <alternativeName>
        <fullName>Preprotein translocase band 1 subunit</fullName>
    </alternativeName>
</protein>
<comment type="function">
    <text evidence="1">Involved in protein export. Participates in an early event of protein translocation (By similarity).</text>
</comment>
<comment type="subcellular location">
    <subcellularLocation>
        <location evidence="1">Cell inner membrane</location>
        <topology evidence="1">Multi-pass membrane protein</topology>
    </subcellularLocation>
</comment>
<comment type="PTM">
    <text evidence="1">The N-terminus is blocked.</text>
</comment>
<comment type="similarity">
    <text evidence="4">Belongs to the SecG family.</text>
</comment>
<comment type="sequence caution" evidence="4">
    <conflict type="erroneous initiation">
        <sequence resource="EMBL-CDS" id="AAN82372"/>
    </conflict>
</comment>
<accession>P0AGA0</accession>
<accession>P33582</accession>